<keyword id="KW-0378">Hydrolase</keyword>
<keyword id="KW-0460">Magnesium</keyword>
<keyword id="KW-0479">Metal-binding</keyword>
<keyword id="KW-0546">Nucleotide metabolism</keyword>
<accession>Q4K3S2</accession>
<protein>
    <recommendedName>
        <fullName evidence="1">Deoxyuridine 5'-triphosphate nucleotidohydrolase</fullName>
        <shortName evidence="1">dUTPase</shortName>
        <ecNumber evidence="1">3.6.1.23</ecNumber>
    </recommendedName>
    <alternativeName>
        <fullName evidence="1">dUTP pyrophosphatase</fullName>
    </alternativeName>
</protein>
<evidence type="ECO:0000255" key="1">
    <source>
        <dbReference type="HAMAP-Rule" id="MF_00116"/>
    </source>
</evidence>
<proteinExistence type="inferred from homology"/>
<gene>
    <name evidence="1" type="primary">dut</name>
    <name type="ordered locus">PFL_6053</name>
</gene>
<comment type="function">
    <text evidence="1">This enzyme is involved in nucleotide metabolism: it produces dUMP, the immediate precursor of thymidine nucleotides and it decreases the intracellular concentration of dUTP so that uracil cannot be incorporated into DNA.</text>
</comment>
<comment type="catalytic activity">
    <reaction evidence="1">
        <text>dUTP + H2O = dUMP + diphosphate + H(+)</text>
        <dbReference type="Rhea" id="RHEA:10248"/>
        <dbReference type="ChEBI" id="CHEBI:15377"/>
        <dbReference type="ChEBI" id="CHEBI:15378"/>
        <dbReference type="ChEBI" id="CHEBI:33019"/>
        <dbReference type="ChEBI" id="CHEBI:61555"/>
        <dbReference type="ChEBI" id="CHEBI:246422"/>
        <dbReference type="EC" id="3.6.1.23"/>
    </reaction>
</comment>
<comment type="cofactor">
    <cofactor evidence="1">
        <name>Mg(2+)</name>
        <dbReference type="ChEBI" id="CHEBI:18420"/>
    </cofactor>
</comment>
<comment type="pathway">
    <text evidence="1">Pyrimidine metabolism; dUMP biosynthesis; dUMP from dCTP (dUTP route): step 2/2.</text>
</comment>
<comment type="similarity">
    <text evidence="1">Belongs to the dUTPase family.</text>
</comment>
<organism>
    <name type="scientific">Pseudomonas fluorescens (strain ATCC BAA-477 / NRRL B-23932 / Pf-5)</name>
    <dbReference type="NCBI Taxonomy" id="220664"/>
    <lineage>
        <taxon>Bacteria</taxon>
        <taxon>Pseudomonadati</taxon>
        <taxon>Pseudomonadota</taxon>
        <taxon>Gammaproteobacteria</taxon>
        <taxon>Pseudomonadales</taxon>
        <taxon>Pseudomonadaceae</taxon>
        <taxon>Pseudomonas</taxon>
    </lineage>
</organism>
<reference key="1">
    <citation type="journal article" date="2005" name="Nat. Biotechnol.">
        <title>Complete genome sequence of the plant commensal Pseudomonas fluorescens Pf-5.</title>
        <authorList>
            <person name="Paulsen I.T."/>
            <person name="Press C.M."/>
            <person name="Ravel J."/>
            <person name="Kobayashi D.Y."/>
            <person name="Myers G.S.A."/>
            <person name="Mavrodi D.V."/>
            <person name="DeBoy R.T."/>
            <person name="Seshadri R."/>
            <person name="Ren Q."/>
            <person name="Madupu R."/>
            <person name="Dodson R.J."/>
            <person name="Durkin A.S."/>
            <person name="Brinkac L.M."/>
            <person name="Daugherty S.C."/>
            <person name="Sullivan S.A."/>
            <person name="Rosovitz M.J."/>
            <person name="Gwinn M.L."/>
            <person name="Zhou L."/>
            <person name="Schneider D.J."/>
            <person name="Cartinhour S.W."/>
            <person name="Nelson W.C."/>
            <person name="Weidman J."/>
            <person name="Watkins K."/>
            <person name="Tran K."/>
            <person name="Khouri H."/>
            <person name="Pierson E.A."/>
            <person name="Pierson L.S. III"/>
            <person name="Thomashow L.S."/>
            <person name="Loper J.E."/>
        </authorList>
    </citation>
    <scope>NUCLEOTIDE SEQUENCE [LARGE SCALE GENOMIC DNA]</scope>
    <source>
        <strain>ATCC BAA-477 / NRRL B-23932 / Pf-5</strain>
    </source>
</reference>
<feature type="chain" id="PRO_0000231419" description="Deoxyuridine 5'-triphosphate nucleotidohydrolase">
    <location>
        <begin position="1"/>
        <end position="151"/>
    </location>
</feature>
<feature type="binding site" evidence="1">
    <location>
        <begin position="70"/>
        <end position="72"/>
    </location>
    <ligand>
        <name>substrate</name>
    </ligand>
</feature>
<feature type="binding site" evidence="1">
    <location>
        <position position="83"/>
    </location>
    <ligand>
        <name>substrate</name>
    </ligand>
</feature>
<feature type="binding site" evidence="1">
    <location>
        <begin position="87"/>
        <end position="89"/>
    </location>
    <ligand>
        <name>substrate</name>
    </ligand>
</feature>
<feature type="binding site" evidence="1">
    <location>
        <position position="97"/>
    </location>
    <ligand>
        <name>substrate</name>
    </ligand>
</feature>
<dbReference type="EC" id="3.6.1.23" evidence="1"/>
<dbReference type="EMBL" id="CP000076">
    <property type="protein sequence ID" value="AAY95241.1"/>
    <property type="molecule type" value="Genomic_DNA"/>
</dbReference>
<dbReference type="RefSeq" id="WP_011064223.1">
    <property type="nucleotide sequence ID" value="NC_004129.6"/>
</dbReference>
<dbReference type="SMR" id="Q4K3S2"/>
<dbReference type="STRING" id="220664.PFL_6053"/>
<dbReference type="GeneID" id="57479012"/>
<dbReference type="KEGG" id="pfl:PFL_6053"/>
<dbReference type="PATRIC" id="fig|220664.5.peg.6180"/>
<dbReference type="eggNOG" id="COG0756">
    <property type="taxonomic scope" value="Bacteria"/>
</dbReference>
<dbReference type="HOGENOM" id="CLU_068508_1_1_6"/>
<dbReference type="UniPathway" id="UPA00610">
    <property type="reaction ID" value="UER00666"/>
</dbReference>
<dbReference type="Proteomes" id="UP000008540">
    <property type="component" value="Chromosome"/>
</dbReference>
<dbReference type="GO" id="GO:0004170">
    <property type="term" value="F:dUTP diphosphatase activity"/>
    <property type="evidence" value="ECO:0007669"/>
    <property type="project" value="UniProtKB-UniRule"/>
</dbReference>
<dbReference type="GO" id="GO:0000287">
    <property type="term" value="F:magnesium ion binding"/>
    <property type="evidence" value="ECO:0007669"/>
    <property type="project" value="UniProtKB-UniRule"/>
</dbReference>
<dbReference type="GO" id="GO:0006226">
    <property type="term" value="P:dUMP biosynthetic process"/>
    <property type="evidence" value="ECO:0007669"/>
    <property type="project" value="UniProtKB-UniRule"/>
</dbReference>
<dbReference type="GO" id="GO:0046081">
    <property type="term" value="P:dUTP catabolic process"/>
    <property type="evidence" value="ECO:0007669"/>
    <property type="project" value="InterPro"/>
</dbReference>
<dbReference type="CDD" id="cd07557">
    <property type="entry name" value="trimeric_dUTPase"/>
    <property type="match status" value="1"/>
</dbReference>
<dbReference type="FunFam" id="2.70.40.10:FF:000002">
    <property type="entry name" value="dUTP diphosphatase"/>
    <property type="match status" value="1"/>
</dbReference>
<dbReference type="Gene3D" id="2.70.40.10">
    <property type="match status" value="1"/>
</dbReference>
<dbReference type="HAMAP" id="MF_00116">
    <property type="entry name" value="dUTPase_bact"/>
    <property type="match status" value="1"/>
</dbReference>
<dbReference type="InterPro" id="IPR008181">
    <property type="entry name" value="dUTPase"/>
</dbReference>
<dbReference type="InterPro" id="IPR029054">
    <property type="entry name" value="dUTPase-like"/>
</dbReference>
<dbReference type="InterPro" id="IPR036157">
    <property type="entry name" value="dUTPase-like_sf"/>
</dbReference>
<dbReference type="InterPro" id="IPR033704">
    <property type="entry name" value="dUTPase_trimeric"/>
</dbReference>
<dbReference type="NCBIfam" id="TIGR00576">
    <property type="entry name" value="dut"/>
    <property type="match status" value="1"/>
</dbReference>
<dbReference type="NCBIfam" id="NF001862">
    <property type="entry name" value="PRK00601.1"/>
    <property type="match status" value="1"/>
</dbReference>
<dbReference type="PANTHER" id="PTHR11241">
    <property type="entry name" value="DEOXYURIDINE 5'-TRIPHOSPHATE NUCLEOTIDOHYDROLASE"/>
    <property type="match status" value="1"/>
</dbReference>
<dbReference type="PANTHER" id="PTHR11241:SF0">
    <property type="entry name" value="DEOXYURIDINE 5'-TRIPHOSPHATE NUCLEOTIDOHYDROLASE"/>
    <property type="match status" value="1"/>
</dbReference>
<dbReference type="Pfam" id="PF00692">
    <property type="entry name" value="dUTPase"/>
    <property type="match status" value="1"/>
</dbReference>
<dbReference type="SUPFAM" id="SSF51283">
    <property type="entry name" value="dUTPase-like"/>
    <property type="match status" value="1"/>
</dbReference>
<sequence>MHALQAKILDPRIGNEFPLPQYATPGSAGLDLRAMLKEDTLLEPGQTLLIPTGLSVYIGDPGLAALILPRSGLGHKHGIVLGNLVGLIDSDYQGELMVSCWNRGQTAFNIAVGERIAQLVLVPVVQAHFEVVEAFDESQRGAGGFGHSGSH</sequence>
<name>DUT_PSEF5</name>